<proteinExistence type="evidence at transcript level"/>
<evidence type="ECO:0000250" key="1">
    <source>
        <dbReference type="UniProtKB" id="P68363"/>
    </source>
</evidence>
<evidence type="ECO:0000250" key="2">
    <source>
        <dbReference type="UniProtKB" id="Q13509"/>
    </source>
</evidence>
<evidence type="ECO:0000256" key="3">
    <source>
        <dbReference type="SAM" id="MobiDB-lite"/>
    </source>
</evidence>
<evidence type="ECO:0000305" key="4"/>
<dbReference type="EMBL" id="M79340">
    <property type="protein sequence ID" value="AAA33284.1"/>
    <property type="molecule type" value="mRNA"/>
</dbReference>
<dbReference type="PIR" id="S17729">
    <property type="entry name" value="S17729"/>
</dbReference>
<dbReference type="SMR" id="P30156"/>
<dbReference type="GO" id="GO:0005737">
    <property type="term" value="C:cytoplasm"/>
    <property type="evidence" value="ECO:0007669"/>
    <property type="project" value="UniProtKB-KW"/>
</dbReference>
<dbReference type="GO" id="GO:0005874">
    <property type="term" value="C:microtubule"/>
    <property type="evidence" value="ECO:0007669"/>
    <property type="project" value="UniProtKB-KW"/>
</dbReference>
<dbReference type="GO" id="GO:0005525">
    <property type="term" value="F:GTP binding"/>
    <property type="evidence" value="ECO:0007669"/>
    <property type="project" value="UniProtKB-KW"/>
</dbReference>
<dbReference type="GO" id="GO:0003924">
    <property type="term" value="F:GTPase activity"/>
    <property type="evidence" value="ECO:0007669"/>
    <property type="project" value="InterPro"/>
</dbReference>
<dbReference type="GO" id="GO:0046872">
    <property type="term" value="F:metal ion binding"/>
    <property type="evidence" value="ECO:0007669"/>
    <property type="project" value="UniProtKB-KW"/>
</dbReference>
<dbReference type="GO" id="GO:0005200">
    <property type="term" value="F:structural constituent of cytoskeleton"/>
    <property type="evidence" value="ECO:0007669"/>
    <property type="project" value="InterPro"/>
</dbReference>
<dbReference type="GO" id="GO:0007017">
    <property type="term" value="P:microtubule-based process"/>
    <property type="evidence" value="ECO:0007669"/>
    <property type="project" value="InterPro"/>
</dbReference>
<dbReference type="CDD" id="cd02187">
    <property type="entry name" value="beta_tubulin"/>
    <property type="match status" value="1"/>
</dbReference>
<dbReference type="FunFam" id="1.10.287.600:FF:000006">
    <property type="entry name" value="Tubulin beta chain"/>
    <property type="match status" value="1"/>
</dbReference>
<dbReference type="FunFam" id="3.30.1330.20:FF:000002">
    <property type="entry name" value="Tubulin beta chain"/>
    <property type="match status" value="1"/>
</dbReference>
<dbReference type="FunFam" id="3.40.50.1440:FF:000003">
    <property type="entry name" value="Tubulin beta chain"/>
    <property type="match status" value="1"/>
</dbReference>
<dbReference type="Gene3D" id="1.10.287.600">
    <property type="entry name" value="Helix hairpin bin"/>
    <property type="match status" value="1"/>
</dbReference>
<dbReference type="Gene3D" id="3.30.1330.20">
    <property type="entry name" value="Tubulin/FtsZ, C-terminal domain"/>
    <property type="match status" value="1"/>
</dbReference>
<dbReference type="Gene3D" id="3.40.50.1440">
    <property type="entry name" value="Tubulin/FtsZ, GTPase domain"/>
    <property type="match status" value="1"/>
</dbReference>
<dbReference type="InterPro" id="IPR013838">
    <property type="entry name" value="Beta-tubulin_BS"/>
</dbReference>
<dbReference type="InterPro" id="IPR002453">
    <property type="entry name" value="Beta_tubulin"/>
</dbReference>
<dbReference type="InterPro" id="IPR008280">
    <property type="entry name" value="Tub_FtsZ_C"/>
</dbReference>
<dbReference type="InterPro" id="IPR000217">
    <property type="entry name" value="Tubulin"/>
</dbReference>
<dbReference type="InterPro" id="IPR037103">
    <property type="entry name" value="Tubulin/FtsZ-like_C"/>
</dbReference>
<dbReference type="InterPro" id="IPR018316">
    <property type="entry name" value="Tubulin/FtsZ_2-layer-sand-dom"/>
</dbReference>
<dbReference type="InterPro" id="IPR036525">
    <property type="entry name" value="Tubulin/FtsZ_GTPase_sf"/>
</dbReference>
<dbReference type="InterPro" id="IPR023123">
    <property type="entry name" value="Tubulin_C"/>
</dbReference>
<dbReference type="InterPro" id="IPR017975">
    <property type="entry name" value="Tubulin_CS"/>
</dbReference>
<dbReference type="InterPro" id="IPR003008">
    <property type="entry name" value="Tubulin_FtsZ_GTPase"/>
</dbReference>
<dbReference type="PANTHER" id="PTHR11588">
    <property type="entry name" value="TUBULIN"/>
    <property type="match status" value="1"/>
</dbReference>
<dbReference type="Pfam" id="PF00091">
    <property type="entry name" value="Tubulin"/>
    <property type="match status" value="1"/>
</dbReference>
<dbReference type="Pfam" id="PF03953">
    <property type="entry name" value="Tubulin_C"/>
    <property type="match status" value="1"/>
</dbReference>
<dbReference type="PRINTS" id="PR01163">
    <property type="entry name" value="BETATUBULIN"/>
</dbReference>
<dbReference type="PRINTS" id="PR01161">
    <property type="entry name" value="TUBULIN"/>
</dbReference>
<dbReference type="SMART" id="SM00864">
    <property type="entry name" value="Tubulin"/>
    <property type="match status" value="1"/>
</dbReference>
<dbReference type="SMART" id="SM00865">
    <property type="entry name" value="Tubulin_C"/>
    <property type="match status" value="1"/>
</dbReference>
<dbReference type="SUPFAM" id="SSF55307">
    <property type="entry name" value="Tubulin C-terminal domain-like"/>
    <property type="match status" value="1"/>
</dbReference>
<dbReference type="SUPFAM" id="SSF52490">
    <property type="entry name" value="Tubulin nucleotide-binding domain-like"/>
    <property type="match status" value="1"/>
</dbReference>
<dbReference type="PROSITE" id="PS00227">
    <property type="entry name" value="TUBULIN"/>
    <property type="match status" value="1"/>
</dbReference>
<dbReference type="PROSITE" id="PS00228">
    <property type="entry name" value="TUBULIN_B_AUTOREG"/>
    <property type="match status" value="1"/>
</dbReference>
<keyword id="KW-0963">Cytoplasm</keyword>
<keyword id="KW-0206">Cytoskeleton</keyword>
<keyword id="KW-0342">GTP-binding</keyword>
<keyword id="KW-0460">Magnesium</keyword>
<keyword id="KW-0479">Metal-binding</keyword>
<keyword id="KW-0493">Microtubule</keyword>
<keyword id="KW-0547">Nucleotide-binding</keyword>
<protein>
    <recommendedName>
        <fullName>Tubulin beta-5 chain</fullName>
    </recommendedName>
    <alternativeName>
        <fullName>Beta-5-tubulin</fullName>
    </alternativeName>
</protein>
<sequence length="447" mass="50005">MREIVHVQAGQCGNQIGSKFWEVISDEHGIDPTGSYHGDSDLQLERINCYFNEATGGRYVPRAILMDLEPGTMDSVRAGPFGQLFRPDNFVFGQTGAGNNWAKGHYTEGAELIDSVLDVVRKEAESCDALQGFQLTHSMGGGTGAGMGTLLISKVREEYPDRVMSTYSVIPSPKVSDTVVEPYNATLSVHQLVENADQCFTLDNEALYDICFRTLKLTTPTYGDLNHLVSAAICGTTCSLRFPGQLNCDLRKLAVNMVPFPRLHFFMIGFAPLTSRGSQQYRALTVPELTQQCFDSKNMMCAADPRHGRYLTCAVMFRGRMSTKEVDEQMLNVVNKNSSYFVEWIPNNVKASICDIPPKGLKMSTTFVGNTTAIQEVWKRVAEQFTSMFRRKAFLHWYTGEGMDEMEFTEAESNMNDLVSEYQQYQDATAEEEGEFDEDEELDDAMG</sequence>
<reference key="1">
    <citation type="journal article" date="1991" name="Plant Mol. Biol.">
        <title>Beta-tubulins are encoded by at least four genes in the brown alga Ectocarpus variabilis.</title>
        <authorList>
            <person name="Mackay R.M."/>
            <person name="Gallant J.W."/>
        </authorList>
    </citation>
    <scope>NUCLEOTIDE SEQUENCE [MRNA]</scope>
</reference>
<comment type="function">
    <text>Tubulin is the major constituent of microtubules, a cylinder consisting of laterally associated linear protofilaments composed of alpha- and beta-tubulin heterodimers. Microtubules grow by the addition of GTP-tubulin dimers to the microtubule end, where a stabilizing cap forms. Below the cap, tubulin dimers are in GDP-bound state, owing to GTPase activity of alpha-tubulin.</text>
</comment>
<comment type="cofactor">
    <cofactor evidence="1">
        <name>Mg(2+)</name>
        <dbReference type="ChEBI" id="CHEBI:18420"/>
    </cofactor>
</comment>
<comment type="subunit">
    <text>Dimer of alpha and beta chains. A typical microtubule is a hollow water-filled tube with an outer diameter of 25 nm and an inner diameter of 15 nM. Alpha-beta heterodimers associate head-to-tail to form protofilaments running lengthwise along the microtubule wall with the beta-tubulin subunit facing the microtubule plus end conferring a structural polarity. Microtubules usually have 13 protofilaments but different protofilament numbers can be found in some organisms and specialized cells.</text>
</comment>
<comment type="subcellular location">
    <subcellularLocation>
        <location>Cytoplasm</location>
        <location>Cytoskeleton</location>
    </subcellularLocation>
</comment>
<comment type="miscellaneous">
    <text>There are at least four genes coding for beta-tubulin in this organism.</text>
</comment>
<comment type="similarity">
    <text evidence="4">Belongs to the tubulin family.</text>
</comment>
<organism>
    <name type="scientific">Ectocarpus variabilis</name>
    <name type="common">Brown alga</name>
    <dbReference type="NCBI Taxonomy" id="2881"/>
    <lineage>
        <taxon>Eukaryota</taxon>
        <taxon>Sar</taxon>
        <taxon>Stramenopiles</taxon>
        <taxon>Ochrophyta</taxon>
        <taxon>PX clade</taxon>
        <taxon>Phaeophyceae</taxon>
        <taxon>Ectocarpales</taxon>
        <taxon>Ectocarpaceae</taxon>
        <taxon>Ectocarpus</taxon>
    </lineage>
</organism>
<accession>P30156</accession>
<gene>
    <name type="primary">TUBB5</name>
</gene>
<name>TBB5_ECTVR</name>
<feature type="chain" id="PRO_0000048340" description="Tubulin beta-5 chain">
    <location>
        <begin position="1"/>
        <end position="447"/>
    </location>
</feature>
<feature type="region of interest" description="Disordered" evidence="3">
    <location>
        <begin position="424"/>
        <end position="447"/>
    </location>
</feature>
<feature type="compositionally biased region" description="Acidic residues" evidence="3">
    <location>
        <begin position="429"/>
        <end position="447"/>
    </location>
</feature>
<feature type="binding site" evidence="2">
    <location>
        <position position="11"/>
    </location>
    <ligand>
        <name>GTP</name>
        <dbReference type="ChEBI" id="CHEBI:37565"/>
    </ligand>
</feature>
<feature type="binding site" evidence="1">
    <location>
        <position position="69"/>
    </location>
    <ligand>
        <name>GTP</name>
        <dbReference type="ChEBI" id="CHEBI:37565"/>
    </ligand>
</feature>
<feature type="binding site" evidence="1">
    <location>
        <position position="69"/>
    </location>
    <ligand>
        <name>Mg(2+)</name>
        <dbReference type="ChEBI" id="CHEBI:18420"/>
    </ligand>
</feature>
<feature type="binding site" evidence="2">
    <location>
        <position position="138"/>
    </location>
    <ligand>
        <name>GTP</name>
        <dbReference type="ChEBI" id="CHEBI:37565"/>
    </ligand>
</feature>
<feature type="binding site" evidence="2">
    <location>
        <position position="142"/>
    </location>
    <ligand>
        <name>GTP</name>
        <dbReference type="ChEBI" id="CHEBI:37565"/>
    </ligand>
</feature>
<feature type="binding site" evidence="2">
    <location>
        <position position="143"/>
    </location>
    <ligand>
        <name>GTP</name>
        <dbReference type="ChEBI" id="CHEBI:37565"/>
    </ligand>
</feature>
<feature type="binding site" evidence="2">
    <location>
        <position position="144"/>
    </location>
    <ligand>
        <name>GTP</name>
        <dbReference type="ChEBI" id="CHEBI:37565"/>
    </ligand>
</feature>
<feature type="binding site" evidence="2">
    <location>
        <position position="204"/>
    </location>
    <ligand>
        <name>GTP</name>
        <dbReference type="ChEBI" id="CHEBI:37565"/>
    </ligand>
</feature>
<feature type="binding site" evidence="2">
    <location>
        <position position="226"/>
    </location>
    <ligand>
        <name>GTP</name>
        <dbReference type="ChEBI" id="CHEBI:37565"/>
    </ligand>
</feature>